<feature type="chain" id="PRO_0000352976" description="Threonylcarbamoyl-AMP synthase">
    <location>
        <begin position="1"/>
        <end position="188"/>
    </location>
</feature>
<feature type="domain" description="YrdC-like" evidence="1">
    <location>
        <begin position="3"/>
        <end position="188"/>
    </location>
</feature>
<gene>
    <name evidence="1" type="primary">tsaC</name>
    <name type="synonym">rimN</name>
    <name type="ordered locus">Shew185_0032</name>
</gene>
<comment type="function">
    <text evidence="1">Required for the formation of a threonylcarbamoyl group on adenosine at position 37 (t(6)A37) in tRNAs that read codons beginning with adenine. Catalyzes the conversion of L-threonine, HCO(3)(-)/CO(2) and ATP to give threonylcarbamoyl-AMP (TC-AMP) as the acyladenylate intermediate, with the release of diphosphate.</text>
</comment>
<comment type="catalytic activity">
    <reaction evidence="1">
        <text>L-threonine + hydrogencarbonate + ATP = L-threonylcarbamoyladenylate + diphosphate + H2O</text>
        <dbReference type="Rhea" id="RHEA:36407"/>
        <dbReference type="ChEBI" id="CHEBI:15377"/>
        <dbReference type="ChEBI" id="CHEBI:17544"/>
        <dbReference type="ChEBI" id="CHEBI:30616"/>
        <dbReference type="ChEBI" id="CHEBI:33019"/>
        <dbReference type="ChEBI" id="CHEBI:57926"/>
        <dbReference type="ChEBI" id="CHEBI:73682"/>
        <dbReference type="EC" id="2.7.7.87"/>
    </reaction>
</comment>
<comment type="subcellular location">
    <subcellularLocation>
        <location evidence="1">Cytoplasm</location>
    </subcellularLocation>
</comment>
<comment type="similarity">
    <text evidence="1">Belongs to the SUA5 family. TsaC subfamily.</text>
</comment>
<evidence type="ECO:0000255" key="1">
    <source>
        <dbReference type="HAMAP-Rule" id="MF_01852"/>
    </source>
</evidence>
<dbReference type="EC" id="2.7.7.87" evidence="1"/>
<dbReference type="EMBL" id="CP000753">
    <property type="protein sequence ID" value="ABS06205.1"/>
    <property type="molecule type" value="Genomic_DNA"/>
</dbReference>
<dbReference type="RefSeq" id="WP_011845357.1">
    <property type="nucleotide sequence ID" value="NC_009665.1"/>
</dbReference>
<dbReference type="SMR" id="A6WHB6"/>
<dbReference type="KEGG" id="sbm:Shew185_0032"/>
<dbReference type="HOGENOM" id="CLU_031397_6_0_6"/>
<dbReference type="GO" id="GO:0005737">
    <property type="term" value="C:cytoplasm"/>
    <property type="evidence" value="ECO:0007669"/>
    <property type="project" value="UniProtKB-SubCell"/>
</dbReference>
<dbReference type="GO" id="GO:0005524">
    <property type="term" value="F:ATP binding"/>
    <property type="evidence" value="ECO:0007669"/>
    <property type="project" value="UniProtKB-UniRule"/>
</dbReference>
<dbReference type="GO" id="GO:0003725">
    <property type="term" value="F:double-stranded RNA binding"/>
    <property type="evidence" value="ECO:0007669"/>
    <property type="project" value="InterPro"/>
</dbReference>
<dbReference type="GO" id="GO:0061710">
    <property type="term" value="F:L-threonylcarbamoyladenylate synthase"/>
    <property type="evidence" value="ECO:0007669"/>
    <property type="project" value="UniProtKB-EC"/>
</dbReference>
<dbReference type="GO" id="GO:0000049">
    <property type="term" value="F:tRNA binding"/>
    <property type="evidence" value="ECO:0007669"/>
    <property type="project" value="TreeGrafter"/>
</dbReference>
<dbReference type="GO" id="GO:0006450">
    <property type="term" value="P:regulation of translational fidelity"/>
    <property type="evidence" value="ECO:0007669"/>
    <property type="project" value="TreeGrafter"/>
</dbReference>
<dbReference type="GO" id="GO:0002949">
    <property type="term" value="P:tRNA threonylcarbamoyladenosine modification"/>
    <property type="evidence" value="ECO:0007669"/>
    <property type="project" value="UniProtKB-UniRule"/>
</dbReference>
<dbReference type="FunFam" id="3.90.870.10:FF:000004">
    <property type="entry name" value="Threonylcarbamoyl-AMP synthase"/>
    <property type="match status" value="1"/>
</dbReference>
<dbReference type="Gene3D" id="3.90.870.10">
    <property type="entry name" value="DHBP synthase"/>
    <property type="match status" value="1"/>
</dbReference>
<dbReference type="HAMAP" id="MF_01852">
    <property type="entry name" value="TsaC"/>
    <property type="match status" value="1"/>
</dbReference>
<dbReference type="InterPro" id="IPR017945">
    <property type="entry name" value="DHBP_synth_RibB-like_a/b_dom"/>
</dbReference>
<dbReference type="InterPro" id="IPR006070">
    <property type="entry name" value="Sua5-like_dom"/>
</dbReference>
<dbReference type="InterPro" id="IPR023535">
    <property type="entry name" value="TC-AMP_synthase"/>
</dbReference>
<dbReference type="InterPro" id="IPR050156">
    <property type="entry name" value="TC-AMP_synthase_SUA5"/>
</dbReference>
<dbReference type="NCBIfam" id="TIGR00057">
    <property type="entry name" value="L-threonylcarbamoyladenylate synthase"/>
    <property type="match status" value="1"/>
</dbReference>
<dbReference type="PANTHER" id="PTHR17490">
    <property type="entry name" value="SUA5"/>
    <property type="match status" value="1"/>
</dbReference>
<dbReference type="PANTHER" id="PTHR17490:SF18">
    <property type="entry name" value="THREONYLCARBAMOYL-AMP SYNTHASE"/>
    <property type="match status" value="1"/>
</dbReference>
<dbReference type="Pfam" id="PF01300">
    <property type="entry name" value="Sua5_yciO_yrdC"/>
    <property type="match status" value="1"/>
</dbReference>
<dbReference type="SUPFAM" id="SSF55821">
    <property type="entry name" value="YrdC/RibB"/>
    <property type="match status" value="1"/>
</dbReference>
<dbReference type="PROSITE" id="PS51163">
    <property type="entry name" value="YRDC"/>
    <property type="match status" value="1"/>
</dbReference>
<protein>
    <recommendedName>
        <fullName evidence="1">Threonylcarbamoyl-AMP synthase</fullName>
        <shortName evidence="1">TC-AMP synthase</shortName>
        <ecNumber evidence="1">2.7.7.87</ecNumber>
    </recommendedName>
    <alternativeName>
        <fullName evidence="1">L-threonylcarbamoyladenylate synthase</fullName>
    </alternativeName>
    <alternativeName>
        <fullName evidence="1">t(6)A37 threonylcarbamoyladenosine biosynthesis protein TsaC</fullName>
    </alternativeName>
    <alternativeName>
        <fullName evidence="1">tRNA threonylcarbamoyladenosine biosynthesis protein TsaC</fullName>
    </alternativeName>
</protein>
<sequence>MLQLHPSDIKDIILQGGVIAYPTEAVYGLGCDPDNDTAIQKLLAVKQRPWQKGLILVASDFQQLLAYVDESQLTAEQLEFAFSKWPGPFTFVMPIKAHVSKYLCGEFDSIAVRVSAHAGVQALCRALNKPLVSTSANLAGEDPALTAAEILADFTGKIDALVLGELGEQRQPSTIIDARSGKILRNGQ</sequence>
<name>TSAC_SHEB8</name>
<keyword id="KW-0067">ATP-binding</keyword>
<keyword id="KW-0963">Cytoplasm</keyword>
<keyword id="KW-0547">Nucleotide-binding</keyword>
<keyword id="KW-0548">Nucleotidyltransferase</keyword>
<keyword id="KW-0808">Transferase</keyword>
<keyword id="KW-0819">tRNA processing</keyword>
<proteinExistence type="inferred from homology"/>
<organism>
    <name type="scientific">Shewanella baltica (strain OS185)</name>
    <dbReference type="NCBI Taxonomy" id="402882"/>
    <lineage>
        <taxon>Bacteria</taxon>
        <taxon>Pseudomonadati</taxon>
        <taxon>Pseudomonadota</taxon>
        <taxon>Gammaproteobacteria</taxon>
        <taxon>Alteromonadales</taxon>
        <taxon>Shewanellaceae</taxon>
        <taxon>Shewanella</taxon>
    </lineage>
</organism>
<reference key="1">
    <citation type="submission" date="2007-07" db="EMBL/GenBank/DDBJ databases">
        <title>Complete sequence of chromosome of Shewanella baltica OS185.</title>
        <authorList>
            <consortium name="US DOE Joint Genome Institute"/>
            <person name="Copeland A."/>
            <person name="Lucas S."/>
            <person name="Lapidus A."/>
            <person name="Barry K."/>
            <person name="Glavina del Rio T."/>
            <person name="Dalin E."/>
            <person name="Tice H."/>
            <person name="Pitluck S."/>
            <person name="Sims D."/>
            <person name="Brettin T."/>
            <person name="Bruce D."/>
            <person name="Detter J.C."/>
            <person name="Han C."/>
            <person name="Schmutz J."/>
            <person name="Larimer F."/>
            <person name="Land M."/>
            <person name="Hauser L."/>
            <person name="Kyrpides N."/>
            <person name="Mikhailova N."/>
            <person name="Brettar I."/>
            <person name="Rodrigues J."/>
            <person name="Konstantinidis K."/>
            <person name="Tiedje J."/>
            <person name="Richardson P."/>
        </authorList>
    </citation>
    <scope>NUCLEOTIDE SEQUENCE [LARGE SCALE GENOMIC DNA]</scope>
    <source>
        <strain>OS185</strain>
    </source>
</reference>
<accession>A6WHB6</accession>